<accession>P12679</accession>
<sequence>MLSPAMISLPWRPDAAEYYFSPLSSQPWAMLLHSGFAEHAHNRFDIIVAQPRATLVTHGQLTTLREGETVSTSAADPLTLVHQQLAHCNLQPQPHPHLPFLGGALGLFGYDLGRRFEHLPARADADIELPDMAVGIYDWALIVDHQRREVSLFSYDDPQARLAWLEAQTAPVAATFTLTSAWRANMSREEYGEKFRQIQAYLHSGDCYQVNLAQRFTATYRGDEWQAFRQLNRANRAPFSAFIRLDEGAVLSLSPERFIQLRQGDIQTRPIKGTLPRLADPEQDALQQQKLANSPKDRAENLMIVDLMRNDIGRVAEPGSVRVPELFVVEPFPAVHHLVSTVTARLPAHLHAADLLRAAFPGGSITGAPKVRAMEIIDELEPQRRNAWCGSIGYLSFCGNMDSSITIRTLTAWQGHLYCSAGGGIVADSEEAAEYQETFDKVNRILHQLES</sequence>
<name>PABB_KLEAE</name>
<organism>
    <name type="scientific">Klebsiella aerogenes</name>
    <name type="common">Enterobacter aerogenes</name>
    <dbReference type="NCBI Taxonomy" id="548"/>
    <lineage>
        <taxon>Bacteria</taxon>
        <taxon>Pseudomonadati</taxon>
        <taxon>Pseudomonadota</taxon>
        <taxon>Gammaproteobacteria</taxon>
        <taxon>Enterobacterales</taxon>
        <taxon>Enterobacteriaceae</taxon>
        <taxon>Klebsiella/Raoultella group</taxon>
        <taxon>Klebsiella</taxon>
    </lineage>
</organism>
<reference key="1">
    <citation type="journal article" date="1988" name="Mol. Biol. Evol.">
        <title>Evolution of aminobenzoate synthases: nucleotide sequences of Salmonella typhimurium and Klebsiella aerogenes pabB.</title>
        <authorList>
            <person name="Goncharoff P."/>
            <person name="Nichols B.P."/>
        </authorList>
    </citation>
    <scope>NUCLEOTIDE SEQUENCE [GENOMIC DNA]</scope>
</reference>
<proteinExistence type="inferred from homology"/>
<comment type="function">
    <text evidence="1">Part of a heterodimeric complex that catalyzes the two-step biosynthesis of 4-amino-4-deoxychorismate (ADC), a precursor of p-aminobenzoate (PABA) and tetrahydrofolate. In the first step, a glutamine amidotransferase (PabA) generates ammonia as a substrate that, along with chorismate, is used in the second step, catalyzed by aminodeoxychorismate synthase (PabB) to produce ADC (By similarity).</text>
</comment>
<comment type="catalytic activity">
    <reaction>
        <text>chorismate + L-glutamine = 4-amino-4-deoxychorismate + L-glutamate</text>
        <dbReference type="Rhea" id="RHEA:11672"/>
        <dbReference type="ChEBI" id="CHEBI:29748"/>
        <dbReference type="ChEBI" id="CHEBI:29985"/>
        <dbReference type="ChEBI" id="CHEBI:58359"/>
        <dbReference type="ChEBI" id="CHEBI:58406"/>
        <dbReference type="EC" id="2.6.1.85"/>
    </reaction>
</comment>
<comment type="cofactor">
    <cofactor evidence="1">
        <name>Mg(2+)</name>
        <dbReference type="ChEBI" id="CHEBI:18420"/>
    </cofactor>
</comment>
<comment type="pathway">
    <text>Cofactor biosynthesis; tetrahydrofolate biosynthesis; 4-aminobenzoate from chorismate: step 1/2.</text>
</comment>
<comment type="subunit">
    <text evidence="1">Monomer. Heterodimer consisting of two non-identical subunits: a glutamine amidotransferase subunit (PabA) and a aminodeoxychorismate synthase subunit (PabB) (By similarity).</text>
</comment>
<comment type="similarity">
    <text evidence="2">Belongs to the anthranilate synthase component I family.</text>
</comment>
<keyword id="KW-0289">Folate biosynthesis</keyword>
<keyword id="KW-0460">Magnesium</keyword>
<keyword id="KW-0808">Transferase</keyword>
<evidence type="ECO:0000250" key="1"/>
<evidence type="ECO:0000305" key="2"/>
<protein>
    <recommendedName>
        <fullName>Aminodeoxychorismate synthase component 1</fullName>
        <shortName>ADC synthase</shortName>
        <shortName>ADCS</shortName>
        <ecNumber>2.6.1.85</ecNumber>
    </recommendedName>
    <alternativeName>
        <fullName>4-amino-4-deoxychorismate synthase component 1</fullName>
    </alternativeName>
</protein>
<gene>
    <name type="primary">pabB</name>
</gene>
<dbReference type="EC" id="2.6.1.85"/>
<dbReference type="EMBL" id="M22078">
    <property type="protein sequence ID" value="AAA88207.1"/>
    <property type="molecule type" value="Genomic_DNA"/>
</dbReference>
<dbReference type="SMR" id="P12679"/>
<dbReference type="STRING" id="548.EAG7_00981"/>
<dbReference type="UniPathway" id="UPA00077">
    <property type="reaction ID" value="UER00149"/>
</dbReference>
<dbReference type="GO" id="GO:0046820">
    <property type="term" value="F:4-amino-4-deoxychorismate synthase activity"/>
    <property type="evidence" value="ECO:0000250"/>
    <property type="project" value="UniProtKB"/>
</dbReference>
<dbReference type="GO" id="GO:0000287">
    <property type="term" value="F:magnesium ion binding"/>
    <property type="evidence" value="ECO:0000250"/>
    <property type="project" value="UniProtKB"/>
</dbReference>
<dbReference type="GO" id="GO:0046656">
    <property type="term" value="P:folic acid biosynthetic process"/>
    <property type="evidence" value="ECO:0007669"/>
    <property type="project" value="UniProtKB-KW"/>
</dbReference>
<dbReference type="GO" id="GO:0000162">
    <property type="term" value="P:L-tryptophan biosynthetic process"/>
    <property type="evidence" value="ECO:0007669"/>
    <property type="project" value="TreeGrafter"/>
</dbReference>
<dbReference type="GO" id="GO:0046654">
    <property type="term" value="P:tetrahydrofolate biosynthetic process"/>
    <property type="evidence" value="ECO:0000250"/>
    <property type="project" value="UniProtKB"/>
</dbReference>
<dbReference type="FunFam" id="3.60.120.10:FF:000004">
    <property type="entry name" value="Aminodeoxychorismate synthase, component I"/>
    <property type="match status" value="1"/>
</dbReference>
<dbReference type="Gene3D" id="3.60.120.10">
    <property type="entry name" value="Anthranilate synthase"/>
    <property type="match status" value="1"/>
</dbReference>
<dbReference type="InterPro" id="IPR005802">
    <property type="entry name" value="ADC_synth_comp_1"/>
</dbReference>
<dbReference type="InterPro" id="IPR005801">
    <property type="entry name" value="ADC_synthase"/>
</dbReference>
<dbReference type="InterPro" id="IPR019999">
    <property type="entry name" value="Anth_synth_I-like"/>
</dbReference>
<dbReference type="InterPro" id="IPR006805">
    <property type="entry name" value="Anth_synth_I_N"/>
</dbReference>
<dbReference type="InterPro" id="IPR015890">
    <property type="entry name" value="Chorismate_C"/>
</dbReference>
<dbReference type="NCBIfam" id="TIGR00553">
    <property type="entry name" value="pabB"/>
    <property type="match status" value="1"/>
</dbReference>
<dbReference type="NCBIfam" id="NF012009">
    <property type="entry name" value="PRK15465.1"/>
    <property type="match status" value="1"/>
</dbReference>
<dbReference type="PANTHER" id="PTHR11236">
    <property type="entry name" value="AMINOBENZOATE/ANTHRANILATE SYNTHASE"/>
    <property type="match status" value="1"/>
</dbReference>
<dbReference type="PANTHER" id="PTHR11236:SF50">
    <property type="entry name" value="AMINODEOXYCHORISMATE SYNTHASE COMPONENT 1"/>
    <property type="match status" value="1"/>
</dbReference>
<dbReference type="Pfam" id="PF04715">
    <property type="entry name" value="Anth_synt_I_N"/>
    <property type="match status" value="1"/>
</dbReference>
<dbReference type="Pfam" id="PF00425">
    <property type="entry name" value="Chorismate_bind"/>
    <property type="match status" value="1"/>
</dbReference>
<dbReference type="PRINTS" id="PR00095">
    <property type="entry name" value="ANTSNTHASEI"/>
</dbReference>
<dbReference type="SUPFAM" id="SSF56322">
    <property type="entry name" value="ADC synthase"/>
    <property type="match status" value="1"/>
</dbReference>
<feature type="chain" id="PRO_0000154137" description="Aminodeoxychorismate synthase component 1">
    <location>
        <begin position="1"/>
        <end position="451"/>
    </location>
</feature>
<feature type="active site" description="Proton donor" evidence="1">
    <location>
        <position position="256"/>
    </location>
</feature>
<feature type="active site" description="N6-(4-deoxychorismate)-lysine intermediate" evidence="1">
    <location>
        <position position="272"/>
    </location>
</feature>
<feature type="binding site" evidence="1">
    <location>
        <position position="34"/>
    </location>
    <ligand>
        <name>L-tryptophan</name>
        <dbReference type="ChEBI" id="CHEBI:57912"/>
    </ligand>
</feature>
<feature type="binding site" evidence="1">
    <location>
        <begin position="41"/>
        <end position="44"/>
    </location>
    <ligand>
        <name>L-tryptophan</name>
        <dbReference type="ChEBI" id="CHEBI:57912"/>
    </ligand>
</feature>
<feature type="binding site" evidence="1">
    <location>
        <begin position="238"/>
        <end position="240"/>
    </location>
    <ligand>
        <name>L-tryptophan</name>
        <dbReference type="ChEBI" id="CHEBI:57912"/>
    </ligand>
</feature>